<reference key="1">
    <citation type="journal article" date="2009" name="J. Bacteriol.">
        <title>Role of conjugative elements in the evolution of the multidrug-resistant pandemic clone Streptococcus pneumoniae Spain23F ST81.</title>
        <authorList>
            <person name="Croucher N.J."/>
            <person name="Walker D."/>
            <person name="Romero P."/>
            <person name="Lennard N."/>
            <person name="Paterson G.K."/>
            <person name="Bason N.C."/>
            <person name="Mitchell A.M."/>
            <person name="Quail M.A."/>
            <person name="Andrew P.W."/>
            <person name="Parkhill J."/>
            <person name="Bentley S.D."/>
            <person name="Mitchell T.J."/>
        </authorList>
    </citation>
    <scope>NUCLEOTIDE SEQUENCE [LARGE SCALE GENOMIC DNA]</scope>
    <source>
        <strain>ATCC 700669 / Spain 23F-1</strain>
    </source>
</reference>
<feature type="chain" id="PRO_1000125621" description="Glutamate racemase">
    <location>
        <begin position="1"/>
        <end position="264"/>
    </location>
</feature>
<feature type="active site" description="Proton donor/acceptor" evidence="1">
    <location>
        <position position="73"/>
    </location>
</feature>
<feature type="active site" description="Proton donor/acceptor" evidence="1">
    <location>
        <position position="183"/>
    </location>
</feature>
<feature type="binding site" evidence="1">
    <location>
        <begin position="10"/>
        <end position="11"/>
    </location>
    <ligand>
        <name>substrate</name>
    </ligand>
</feature>
<feature type="binding site" evidence="1">
    <location>
        <begin position="42"/>
        <end position="43"/>
    </location>
    <ligand>
        <name>substrate</name>
    </ligand>
</feature>
<feature type="binding site" evidence="1">
    <location>
        <begin position="74"/>
        <end position="75"/>
    </location>
    <ligand>
        <name>substrate</name>
    </ligand>
</feature>
<feature type="binding site" evidence="1">
    <location>
        <begin position="184"/>
        <end position="185"/>
    </location>
    <ligand>
        <name>substrate</name>
    </ligand>
</feature>
<dbReference type="EC" id="5.1.1.3" evidence="1"/>
<dbReference type="EMBL" id="FM211187">
    <property type="protein sequence ID" value="CAR69656.1"/>
    <property type="molecule type" value="Genomic_DNA"/>
</dbReference>
<dbReference type="SMR" id="B8ZNI5"/>
<dbReference type="KEGG" id="sne:SPN23F18940"/>
<dbReference type="HOGENOM" id="CLU_052344_0_2_9"/>
<dbReference type="UniPathway" id="UPA00219"/>
<dbReference type="GO" id="GO:0008881">
    <property type="term" value="F:glutamate racemase activity"/>
    <property type="evidence" value="ECO:0007669"/>
    <property type="project" value="UniProtKB-UniRule"/>
</dbReference>
<dbReference type="GO" id="GO:0071555">
    <property type="term" value="P:cell wall organization"/>
    <property type="evidence" value="ECO:0007669"/>
    <property type="project" value="UniProtKB-KW"/>
</dbReference>
<dbReference type="GO" id="GO:0009252">
    <property type="term" value="P:peptidoglycan biosynthetic process"/>
    <property type="evidence" value="ECO:0007669"/>
    <property type="project" value="UniProtKB-UniRule"/>
</dbReference>
<dbReference type="GO" id="GO:0008360">
    <property type="term" value="P:regulation of cell shape"/>
    <property type="evidence" value="ECO:0007669"/>
    <property type="project" value="UniProtKB-KW"/>
</dbReference>
<dbReference type="FunFam" id="3.40.50.1860:FF:000002">
    <property type="entry name" value="Glutamate racemase"/>
    <property type="match status" value="1"/>
</dbReference>
<dbReference type="Gene3D" id="3.40.50.1860">
    <property type="match status" value="2"/>
</dbReference>
<dbReference type="HAMAP" id="MF_00258">
    <property type="entry name" value="Glu_racemase"/>
    <property type="match status" value="1"/>
</dbReference>
<dbReference type="InterPro" id="IPR015942">
    <property type="entry name" value="Asp/Glu/hydantoin_racemase"/>
</dbReference>
<dbReference type="InterPro" id="IPR001920">
    <property type="entry name" value="Asp/Glu_race"/>
</dbReference>
<dbReference type="InterPro" id="IPR018187">
    <property type="entry name" value="Asp/Glu_racemase_AS_1"/>
</dbReference>
<dbReference type="InterPro" id="IPR033134">
    <property type="entry name" value="Asp/Glu_racemase_AS_2"/>
</dbReference>
<dbReference type="InterPro" id="IPR004391">
    <property type="entry name" value="Glu_race"/>
</dbReference>
<dbReference type="NCBIfam" id="TIGR00067">
    <property type="entry name" value="glut_race"/>
    <property type="match status" value="1"/>
</dbReference>
<dbReference type="NCBIfam" id="NF002035">
    <property type="entry name" value="PRK00865.1-3"/>
    <property type="match status" value="1"/>
</dbReference>
<dbReference type="PANTHER" id="PTHR21198">
    <property type="entry name" value="GLUTAMATE RACEMASE"/>
    <property type="match status" value="1"/>
</dbReference>
<dbReference type="PANTHER" id="PTHR21198:SF2">
    <property type="entry name" value="GLUTAMATE RACEMASE"/>
    <property type="match status" value="1"/>
</dbReference>
<dbReference type="Pfam" id="PF01177">
    <property type="entry name" value="Asp_Glu_race"/>
    <property type="match status" value="1"/>
</dbReference>
<dbReference type="SUPFAM" id="SSF53681">
    <property type="entry name" value="Aspartate/glutamate racemase"/>
    <property type="match status" value="2"/>
</dbReference>
<dbReference type="PROSITE" id="PS00923">
    <property type="entry name" value="ASP_GLU_RACEMASE_1"/>
    <property type="match status" value="1"/>
</dbReference>
<dbReference type="PROSITE" id="PS00924">
    <property type="entry name" value="ASP_GLU_RACEMASE_2"/>
    <property type="match status" value="1"/>
</dbReference>
<protein>
    <recommendedName>
        <fullName evidence="1">Glutamate racemase</fullName>
        <ecNumber evidence="1">5.1.1.3</ecNumber>
    </recommendedName>
</protein>
<gene>
    <name evidence="1" type="primary">murI</name>
    <name type="ordered locus">SPN23F18940</name>
</gene>
<name>MURI_STRPJ</name>
<proteinExistence type="inferred from homology"/>
<comment type="function">
    <text evidence="1">Provides the (R)-glutamate required for cell wall biosynthesis.</text>
</comment>
<comment type="catalytic activity">
    <reaction evidence="1">
        <text>L-glutamate = D-glutamate</text>
        <dbReference type="Rhea" id="RHEA:12813"/>
        <dbReference type="ChEBI" id="CHEBI:29985"/>
        <dbReference type="ChEBI" id="CHEBI:29986"/>
        <dbReference type="EC" id="5.1.1.3"/>
    </reaction>
</comment>
<comment type="pathway">
    <text evidence="1">Cell wall biogenesis; peptidoglycan biosynthesis.</text>
</comment>
<comment type="similarity">
    <text evidence="1">Belongs to the aspartate/glutamate racemases family.</text>
</comment>
<organism>
    <name type="scientific">Streptococcus pneumoniae (strain ATCC 700669 / Spain 23F-1)</name>
    <dbReference type="NCBI Taxonomy" id="561276"/>
    <lineage>
        <taxon>Bacteria</taxon>
        <taxon>Bacillati</taxon>
        <taxon>Bacillota</taxon>
        <taxon>Bacilli</taxon>
        <taxon>Lactobacillales</taxon>
        <taxon>Streptococcaceae</taxon>
        <taxon>Streptococcus</taxon>
    </lineage>
</organism>
<accession>B8ZNI5</accession>
<evidence type="ECO:0000255" key="1">
    <source>
        <dbReference type="HAMAP-Rule" id="MF_00258"/>
    </source>
</evidence>
<keyword id="KW-0133">Cell shape</keyword>
<keyword id="KW-0961">Cell wall biogenesis/degradation</keyword>
<keyword id="KW-0413">Isomerase</keyword>
<keyword id="KW-0573">Peptidoglycan synthesis</keyword>
<sequence length="264" mass="29138">MDNRPIGFLDSGVGGLTVVRELMRQLPHEEIVYIGDSARAPYGPRPAEQIREYTWQLVNFLLTKDVKMIVIACNTATAVVWEEIKAQLDIPVLGVILPGASAAIKSSQGGKIGVIGTPMTVQSDIYRQKIHDLDPDLQVESLACPKFAPLVESGALSTSVTKKVVYETLRPLVGKVDSLILGCTHYPLLRPIIQNVMGPKVQLIDSGAECVRDISVLLNYFEINRGRDAGPLHHRFYTTASSQSFAQIGEEWLEKEIHVEHVEL</sequence>